<keyword id="KW-0963">Cytoplasm</keyword>
<keyword id="KW-0378">Hydrolase</keyword>
<comment type="function">
    <text evidence="1">Probably catalyzes the hydrolysis of L-ascorbate-6-P into 3-keto-L-gulonate-6-P. Is essential for L-ascorbate utilization under anaerobic conditions.</text>
</comment>
<comment type="catalytic activity">
    <reaction evidence="1">
        <text>L-ascorbate 6-phosphate + H2O = 3-dehydro-L-gulonate 6-phosphate</text>
        <dbReference type="Rhea" id="RHEA:28803"/>
        <dbReference type="ChEBI" id="CHEBI:15377"/>
        <dbReference type="ChEBI" id="CHEBI:58774"/>
        <dbReference type="ChEBI" id="CHEBI:61698"/>
    </reaction>
</comment>
<comment type="cofactor">
    <cofactor evidence="1">
        <name>a divalent metal cation</name>
        <dbReference type="ChEBI" id="CHEBI:60240"/>
    </cofactor>
</comment>
<comment type="pathway">
    <text evidence="1">Cofactor degradation; L-ascorbate degradation; D-xylulose 5-phosphate from L-ascorbate: step 1/4.</text>
</comment>
<comment type="subcellular location">
    <subcellularLocation>
        <location evidence="1">Cytoplasm</location>
    </subcellularLocation>
</comment>
<comment type="induction">
    <text evidence="1">Induced by L-ascorbate. Repressed by UlaR.</text>
</comment>
<comment type="similarity">
    <text evidence="1">Belongs to the UlaG family.</text>
</comment>
<dbReference type="EC" id="3.1.1.-" evidence="1"/>
<dbReference type="EMBL" id="AP009240">
    <property type="protein sequence ID" value="BAG80014.1"/>
    <property type="molecule type" value="Genomic_DNA"/>
</dbReference>
<dbReference type="RefSeq" id="WP_001295191.1">
    <property type="nucleotide sequence ID" value="NC_011415.1"/>
</dbReference>
<dbReference type="SMR" id="B6I297"/>
<dbReference type="GeneID" id="93777632"/>
<dbReference type="KEGG" id="ecy:ECSE_4490"/>
<dbReference type="HOGENOM" id="CLU_074775_0_0_6"/>
<dbReference type="UniPathway" id="UPA00263">
    <property type="reaction ID" value="UER00377"/>
</dbReference>
<dbReference type="Proteomes" id="UP000008199">
    <property type="component" value="Chromosome"/>
</dbReference>
<dbReference type="GO" id="GO:0005737">
    <property type="term" value="C:cytoplasm"/>
    <property type="evidence" value="ECO:0007669"/>
    <property type="project" value="UniProtKB-SubCell"/>
</dbReference>
<dbReference type="GO" id="GO:0035460">
    <property type="term" value="F:L-ascorbate 6-phosphate lactonase activity"/>
    <property type="evidence" value="ECO:0007669"/>
    <property type="project" value="InterPro"/>
</dbReference>
<dbReference type="GO" id="GO:0030145">
    <property type="term" value="F:manganese ion binding"/>
    <property type="evidence" value="ECO:0007669"/>
    <property type="project" value="InterPro"/>
</dbReference>
<dbReference type="GO" id="GO:0019854">
    <property type="term" value="P:L-ascorbic acid catabolic process"/>
    <property type="evidence" value="ECO:0007669"/>
    <property type="project" value="UniProtKB-UniRule"/>
</dbReference>
<dbReference type="CDD" id="cd16284">
    <property type="entry name" value="UlaG-like_MBL-fold"/>
    <property type="match status" value="1"/>
</dbReference>
<dbReference type="FunFam" id="3.60.15.10:FF:000004">
    <property type="entry name" value="Probable L-ascorbate-6-phosphate lactonase UlaG"/>
    <property type="match status" value="1"/>
</dbReference>
<dbReference type="Gene3D" id="3.60.15.10">
    <property type="entry name" value="Ribonuclease Z/Hydroxyacylglutathione hydrolase-like"/>
    <property type="match status" value="1"/>
</dbReference>
<dbReference type="HAMAP" id="MF_01266">
    <property type="entry name" value="UlaG"/>
    <property type="match status" value="1"/>
</dbReference>
<dbReference type="InterPro" id="IPR023951">
    <property type="entry name" value="L-ascorbate_6P_UlaG"/>
</dbReference>
<dbReference type="InterPro" id="IPR001279">
    <property type="entry name" value="Metallo-B-lactamas"/>
</dbReference>
<dbReference type="InterPro" id="IPR036866">
    <property type="entry name" value="RibonucZ/Hydroxyglut_hydro"/>
</dbReference>
<dbReference type="InterPro" id="IPR048021">
    <property type="entry name" value="UlaG-like_MBL-fold"/>
</dbReference>
<dbReference type="InterPro" id="IPR050114">
    <property type="entry name" value="UPF0173_UPF0282_UlaG_hydrolase"/>
</dbReference>
<dbReference type="NCBIfam" id="NF008688">
    <property type="entry name" value="PRK11709.1"/>
    <property type="match status" value="1"/>
</dbReference>
<dbReference type="PANTHER" id="PTHR43546:SF9">
    <property type="entry name" value="L-ASCORBATE-6-PHOSPHATE LACTONASE ULAG-RELATED"/>
    <property type="match status" value="1"/>
</dbReference>
<dbReference type="PANTHER" id="PTHR43546">
    <property type="entry name" value="UPF0173 METAL-DEPENDENT HYDROLASE MJ1163-RELATED"/>
    <property type="match status" value="1"/>
</dbReference>
<dbReference type="Pfam" id="PF12706">
    <property type="entry name" value="Lactamase_B_2"/>
    <property type="match status" value="1"/>
</dbReference>
<dbReference type="SUPFAM" id="SSF56281">
    <property type="entry name" value="Metallo-hydrolase/oxidoreductase"/>
    <property type="match status" value="1"/>
</dbReference>
<evidence type="ECO:0000255" key="1">
    <source>
        <dbReference type="HAMAP-Rule" id="MF_01266"/>
    </source>
</evidence>
<proteinExistence type="inferred from homology"/>
<reference key="1">
    <citation type="journal article" date="2008" name="DNA Res.">
        <title>Complete genome sequence and comparative analysis of the wild-type commensal Escherichia coli strain SE11 isolated from a healthy adult.</title>
        <authorList>
            <person name="Oshima K."/>
            <person name="Toh H."/>
            <person name="Ogura Y."/>
            <person name="Sasamoto H."/>
            <person name="Morita H."/>
            <person name="Park S.-H."/>
            <person name="Ooka T."/>
            <person name="Iyoda S."/>
            <person name="Taylor T.D."/>
            <person name="Hayashi T."/>
            <person name="Itoh K."/>
            <person name="Hattori M."/>
        </authorList>
    </citation>
    <scope>NUCLEOTIDE SEQUENCE [LARGE SCALE GENOMIC DNA]</scope>
    <source>
        <strain>SE11</strain>
    </source>
</reference>
<accession>B6I297</accession>
<protein>
    <recommendedName>
        <fullName evidence="1">Probable L-ascorbate-6-phosphate lactonase UlaG</fullName>
        <ecNumber evidence="1">3.1.1.-</ecNumber>
    </recommendedName>
    <alternativeName>
        <fullName evidence="1">L-ascorbate utilization protein G</fullName>
    </alternativeName>
</protein>
<organism>
    <name type="scientific">Escherichia coli (strain SE11)</name>
    <dbReference type="NCBI Taxonomy" id="409438"/>
    <lineage>
        <taxon>Bacteria</taxon>
        <taxon>Pseudomonadati</taxon>
        <taxon>Pseudomonadota</taxon>
        <taxon>Gammaproteobacteria</taxon>
        <taxon>Enterobacterales</taxon>
        <taxon>Enterobacteriaceae</taxon>
        <taxon>Escherichia</taxon>
    </lineage>
</organism>
<gene>
    <name evidence="1" type="primary">ulaG</name>
    <name type="ordered locus">ECSE_4490</name>
</gene>
<sequence length="354" mass="40061">MSKVKSITRESWILSTFPEWGSWLNEEIEQEQVAPGTFAMWWLGCTGIWLKSEGGTNVCVDFWCGTGKQSHGNPLMKQGHQMQRMAGVKKLQPNLRTTPFVLDPFAIRQIDAVLATHDHNDHIDVNVAAAVMQNCADDVPFIGPKTCVDLWIGWGVPKERCIVVKPGDVVKVKDIEIHALDAFDRTALITLPADQKAAGVLPDGMDDRAVNYLFKTPGGSLYHSGDSHYSNYYAKHGNEHQIDVALGSYGENPRGITDKMTSADMLRMGEALNAKVVIPFHHDIWSNFQADPQEIRVLWEMKKDRLKYGFKPFIWQVGGKFTWPLDKDNFEYHYPRGFDDCFTIEPDLPFKSFL</sequence>
<name>ULAG_ECOSE</name>
<feature type="chain" id="PRO_1000140097" description="Probable L-ascorbate-6-phosphate lactonase UlaG">
    <location>
        <begin position="1"/>
        <end position="354"/>
    </location>
</feature>